<organism>
    <name type="scientific">Ammi majus</name>
    <name type="common">Bishop's weed</name>
    <dbReference type="NCBI Taxonomy" id="48026"/>
    <lineage>
        <taxon>Eukaryota</taxon>
        <taxon>Viridiplantae</taxon>
        <taxon>Streptophyta</taxon>
        <taxon>Embryophyta</taxon>
        <taxon>Tracheophyta</taxon>
        <taxon>Spermatophyta</taxon>
        <taxon>Magnoliopsida</taxon>
        <taxon>eudicotyledons</taxon>
        <taxon>Gunneridae</taxon>
        <taxon>Pentapetalae</taxon>
        <taxon>asterids</taxon>
        <taxon>campanulids</taxon>
        <taxon>Apiales</taxon>
        <taxon>Apiaceae</taxon>
        <taxon>Apioideae</taxon>
        <taxon>apioid superclade</taxon>
        <taxon>Apieae</taxon>
        <taxon>Ammi</taxon>
    </lineage>
</organism>
<name>C71AJ_AMMMJ</name>
<dbReference type="EC" id="1.14.14.141" evidence="2"/>
<dbReference type="EMBL" id="AY532370">
    <property type="protein sequence ID" value="AAT06911.1"/>
    <property type="molecule type" value="mRNA"/>
</dbReference>
<dbReference type="SMR" id="Q6QNI4"/>
<dbReference type="KEGG" id="ag:AAT06911"/>
<dbReference type="BioCyc" id="MetaCyc:MONOMER-12571"/>
<dbReference type="BRENDA" id="1.14.14.141">
    <property type="organism ID" value="296"/>
</dbReference>
<dbReference type="SABIO-RK" id="Q6QNI4"/>
<dbReference type="GO" id="GO:0005789">
    <property type="term" value="C:endoplasmic reticulum membrane"/>
    <property type="evidence" value="ECO:0007669"/>
    <property type="project" value="UniProtKB-SubCell"/>
</dbReference>
<dbReference type="GO" id="GO:0043231">
    <property type="term" value="C:intracellular membrane-bounded organelle"/>
    <property type="evidence" value="ECO:0000314"/>
    <property type="project" value="UniProtKB"/>
</dbReference>
<dbReference type="GO" id="GO:0020037">
    <property type="term" value="F:heme binding"/>
    <property type="evidence" value="ECO:0007669"/>
    <property type="project" value="InterPro"/>
</dbReference>
<dbReference type="GO" id="GO:0005506">
    <property type="term" value="F:iron ion binding"/>
    <property type="evidence" value="ECO:0007669"/>
    <property type="project" value="InterPro"/>
</dbReference>
<dbReference type="GO" id="GO:0016709">
    <property type="term" value="F:oxidoreductase activity, acting on paired donors, with incorporation or reduction of molecular oxygen, NAD(P)H as one donor, and incorporation of one atom of oxygen"/>
    <property type="evidence" value="ECO:0000314"/>
    <property type="project" value="UniProtKB"/>
</dbReference>
<dbReference type="GO" id="GO:0102876">
    <property type="term" value="F:psoralen synthase (NADPH) activity"/>
    <property type="evidence" value="ECO:0007669"/>
    <property type="project" value="UniProtKB-EC"/>
</dbReference>
<dbReference type="GO" id="GO:0002238">
    <property type="term" value="P:response to molecule of fungal origin"/>
    <property type="evidence" value="ECO:0000314"/>
    <property type="project" value="UniProtKB"/>
</dbReference>
<dbReference type="CDD" id="cd11072">
    <property type="entry name" value="CYP71-like"/>
    <property type="match status" value="1"/>
</dbReference>
<dbReference type="FunFam" id="1.10.630.10:FF:000011">
    <property type="entry name" value="Cytochrome P450 83B1"/>
    <property type="match status" value="1"/>
</dbReference>
<dbReference type="Gene3D" id="1.10.630.10">
    <property type="entry name" value="Cytochrome P450"/>
    <property type="match status" value="1"/>
</dbReference>
<dbReference type="InterPro" id="IPR001128">
    <property type="entry name" value="Cyt_P450"/>
</dbReference>
<dbReference type="InterPro" id="IPR017972">
    <property type="entry name" value="Cyt_P450_CS"/>
</dbReference>
<dbReference type="InterPro" id="IPR002401">
    <property type="entry name" value="Cyt_P450_E_grp-I"/>
</dbReference>
<dbReference type="InterPro" id="IPR036396">
    <property type="entry name" value="Cyt_P450_sf"/>
</dbReference>
<dbReference type="PANTHER" id="PTHR47955:SF15">
    <property type="entry name" value="CYTOCHROME P450 71A2-LIKE"/>
    <property type="match status" value="1"/>
</dbReference>
<dbReference type="PANTHER" id="PTHR47955">
    <property type="entry name" value="CYTOCHROME P450 FAMILY 71 PROTEIN"/>
    <property type="match status" value="1"/>
</dbReference>
<dbReference type="Pfam" id="PF00067">
    <property type="entry name" value="p450"/>
    <property type="match status" value="1"/>
</dbReference>
<dbReference type="PRINTS" id="PR00463">
    <property type="entry name" value="EP450I"/>
</dbReference>
<dbReference type="PRINTS" id="PR00385">
    <property type="entry name" value="P450"/>
</dbReference>
<dbReference type="SUPFAM" id="SSF48264">
    <property type="entry name" value="Cytochrome P450"/>
    <property type="match status" value="1"/>
</dbReference>
<dbReference type="PROSITE" id="PS00086">
    <property type="entry name" value="CYTOCHROME_P450"/>
    <property type="match status" value="1"/>
</dbReference>
<keyword id="KW-0256">Endoplasmic reticulum</keyword>
<keyword id="KW-0349">Heme</keyword>
<keyword id="KW-0408">Iron</keyword>
<keyword id="KW-0472">Membrane</keyword>
<keyword id="KW-0479">Metal-binding</keyword>
<keyword id="KW-0492">Microsome</keyword>
<keyword id="KW-0503">Monooxygenase</keyword>
<keyword id="KW-0560">Oxidoreductase</keyword>
<keyword id="KW-0812">Transmembrane</keyword>
<keyword id="KW-1133">Transmembrane helix</keyword>
<feature type="chain" id="PRO_0000395199" description="Psoralen synthase">
    <location>
        <begin position="1"/>
        <end position="494"/>
    </location>
</feature>
<feature type="transmembrane region" description="Helical" evidence="3">
    <location>
        <begin position="12"/>
        <end position="29"/>
    </location>
</feature>
<feature type="binding site" description="axial binding residue" evidence="1">
    <location>
        <position position="436"/>
    </location>
    <ligand>
        <name>heme</name>
        <dbReference type="ChEBI" id="CHEBI:30413"/>
    </ligand>
    <ligandPart>
        <name>Fe</name>
        <dbReference type="ChEBI" id="CHEBI:18248"/>
    </ligandPart>
</feature>
<feature type="mutagenesis site" description="No effect on the activity." evidence="4">
    <original>M</original>
    <variation>V</variation>
    <location>
        <position position="120"/>
    </location>
</feature>
<protein>
    <recommendedName>
        <fullName>Psoralen synthase</fullName>
        <ecNumber evidence="2">1.14.14.141</ecNumber>
    </recommendedName>
    <alternativeName>
        <fullName>Cytochrome P450 CYP71AJ1</fullName>
    </alternativeName>
</protein>
<proteinExistence type="evidence at protein level"/>
<sequence>MKMLEQNPQYLYFFSLFLVTIFLYKWLTLKKTPLKNLPPSPPQYPIIGNLHQIGPDPQASLRDLAQKYGPLMFLKFGTVPVLVVSSADAAREALKTHDLVFADRPYSSVANKIFYNGKDMVFARYTEYWRQVKSICVTQLLSNKRVNSFHYVREEEVDLLVQNLENSHSKVANLTELLIEVTGNVVCRVSVGSGDKVDSYKILILEIMDMLGYSRSIEDFFPLLGWVDWLTGLRGKVAEAAKGVDTFLEGVLKEHLSTTGSKYNDFVSILLEIQEADAGSSMDNECIKSLIWDMLGAGTETISTALEWTLAALIKNPDAMFKLQNEVREIGKGKSKISEADLVKMNYLQAVMKESMRLYFTAPLLVPREARQDIKFMGYDISSGTQVLINAWAIARDPLLWDKPEEFRPERFLNSPIDYKGFHYEFLPFGAGRRGCPGIQFAMCINELVVANLVHKFNFELPDGKRLEDLDMTAASGITLRKKSPLLVVARPHV</sequence>
<evidence type="ECO:0000250" key="1"/>
<evidence type="ECO:0000250" key="2">
    <source>
        <dbReference type="UniProtKB" id="C0SJS4"/>
    </source>
</evidence>
<evidence type="ECO:0000255" key="3"/>
<evidence type="ECO:0000269" key="4">
    <source>
    </source>
</evidence>
<evidence type="ECO:0000305" key="5"/>
<gene>
    <name type="primary">CYP71AJ1</name>
</gene>
<comment type="function">
    <text evidence="4">Involved in linear furanocumarin (psoralen) biosynthesis. Converts marmesin to psoralen.</text>
</comment>
<comment type="catalytic activity">
    <reaction evidence="2">
        <text>(7S)-marmesin + reduced [NADPH--hemoprotein reductase] + O2 = psoralen + acetone + oxidized [NADPH--hemoprotein reductase] + 2 H2O + H(+)</text>
        <dbReference type="Rhea" id="RHEA:19281"/>
        <dbReference type="Rhea" id="RHEA-COMP:11964"/>
        <dbReference type="Rhea" id="RHEA-COMP:11965"/>
        <dbReference type="ChEBI" id="CHEBI:6695"/>
        <dbReference type="ChEBI" id="CHEBI:15347"/>
        <dbReference type="ChEBI" id="CHEBI:15377"/>
        <dbReference type="ChEBI" id="CHEBI:15378"/>
        <dbReference type="ChEBI" id="CHEBI:15379"/>
        <dbReference type="ChEBI" id="CHEBI:27616"/>
        <dbReference type="ChEBI" id="CHEBI:57618"/>
        <dbReference type="ChEBI" id="CHEBI:58210"/>
        <dbReference type="EC" id="1.14.14.141"/>
    </reaction>
</comment>
<comment type="activity regulation">
    <text evidence="4">Inhibited by columbianetin.</text>
</comment>
<comment type="biophysicochemical properties">
    <kinetics>
        <KM evidence="4">1.5 uM for marmesin</KM>
        <KM evidence="4">29.3 uM for 5-hydroxymarmesin</KM>
    </kinetics>
</comment>
<comment type="subcellular location">
    <subcellularLocation>
        <location evidence="5">Endoplasmic reticulum membrane</location>
        <topology evidence="5">Single-pass membrane protein</topology>
    </subcellularLocation>
    <subcellularLocation>
        <location evidence="5">Microsome membrane</location>
        <topology evidence="5">Single-pass membrane protein</topology>
    </subcellularLocation>
</comment>
<comment type="induction">
    <text evidence="4">By fungal elicitor extracted from Phytophthora sojae cell wall.</text>
</comment>
<comment type="biotechnology">
    <text>Psoralen possesses photocarcinogen properties. It intercalates in double-stranded DNA and cross-links pyrimidine bases under UV-A irradiation. Psoralen is widely used in combination with UV-A radiation to treat a variety of skin disorders like psoriasis or eczema.</text>
</comment>
<comment type="similarity">
    <text evidence="5">Belongs to the cytochrome P450 family.</text>
</comment>
<reference key="1">
    <citation type="journal article" date="2007" name="J. Biol. Chem.">
        <title>Molecular cloning and functional characterization of psoralen synthase, the first committed monooxygenase of furanocoumarin biosynthesis.</title>
        <authorList>
            <person name="Larbat R."/>
            <person name="Kellner S."/>
            <person name="Specker S."/>
            <person name="Hehn A."/>
            <person name="Gontier E."/>
            <person name="Hans J."/>
            <person name="Bourgaud F."/>
            <person name="Matern U."/>
        </authorList>
    </citation>
    <scope>NUCLEOTIDE SEQUENCE [MRNA]</scope>
    <scope>FUNCTION</scope>
    <scope>ACTIVITY REGULATION</scope>
    <scope>BIOPHYSICOCHEMICAL PROPERTIES</scope>
    <scope>INDUCTION</scope>
    <scope>MUTAGENESIS OF MET-120</scope>
</reference>
<accession>Q6QNI4</accession>